<accession>Q8IWV2</accession>
<accession>B2RAX3</accession>
<accession>Q8IX14</accession>
<accession>Q8TC35</accession>
<dbReference type="EMBL" id="AF464063">
    <property type="protein sequence ID" value="AAN86141.1"/>
    <property type="molecule type" value="mRNA"/>
</dbReference>
<dbReference type="EMBL" id="AY090737">
    <property type="protein sequence ID" value="AAM00025.1"/>
    <property type="molecule type" value="mRNA"/>
</dbReference>
<dbReference type="EMBL" id="AF549455">
    <property type="protein sequence ID" value="AAP05786.1"/>
    <property type="molecule type" value="mRNA"/>
</dbReference>
<dbReference type="EMBL" id="AK314396">
    <property type="protein sequence ID" value="BAG37020.1"/>
    <property type="molecule type" value="mRNA"/>
</dbReference>
<dbReference type="EMBL" id="AC018842">
    <property type="status" value="NOT_ANNOTATED_CDS"/>
    <property type="molecule type" value="Genomic_DNA"/>
</dbReference>
<dbReference type="EMBL" id="AC022002">
    <property type="status" value="NOT_ANNOTATED_CDS"/>
    <property type="molecule type" value="Genomic_DNA"/>
</dbReference>
<dbReference type="EMBL" id="AC022008">
    <property type="status" value="NOT_ANNOTATED_CDS"/>
    <property type="molecule type" value="Genomic_DNA"/>
</dbReference>
<dbReference type="EMBL" id="AC024057">
    <property type="status" value="NOT_ANNOTATED_CDS"/>
    <property type="molecule type" value="Genomic_DNA"/>
</dbReference>
<dbReference type="EMBL" id="AC026882">
    <property type="status" value="NOT_ANNOTATED_CDS"/>
    <property type="molecule type" value="Genomic_DNA"/>
</dbReference>
<dbReference type="EMBL" id="AC066608">
    <property type="status" value="NOT_ANNOTATED_CDS"/>
    <property type="molecule type" value="Genomic_DNA"/>
</dbReference>
<dbReference type="EMBL" id="AC087094">
    <property type="status" value="NOT_ANNOTATED_CDS"/>
    <property type="molecule type" value="Genomic_DNA"/>
</dbReference>
<dbReference type="EMBL" id="AC087427">
    <property type="status" value="NOT_ANNOTATED_CDS"/>
    <property type="molecule type" value="Genomic_DNA"/>
</dbReference>
<dbReference type="EMBL" id="CH471055">
    <property type="protein sequence ID" value="EAW63874.1"/>
    <property type="molecule type" value="Genomic_DNA"/>
</dbReference>
<dbReference type="EMBL" id="BC026119">
    <property type="protein sequence ID" value="AAH26119.1"/>
    <property type="molecule type" value="mRNA"/>
</dbReference>
<dbReference type="CCDS" id="CCDS2558.1">
    <molecule id="Q8IWV2-4"/>
</dbReference>
<dbReference type="CCDS" id="CCDS43041.1">
    <molecule id="Q8IWV2-1"/>
</dbReference>
<dbReference type="RefSeq" id="NP_001193884.1">
    <molecule id="Q8IWV2-1"/>
    <property type="nucleotide sequence ID" value="NM_001206955.2"/>
</dbReference>
<dbReference type="RefSeq" id="NP_001193885.1">
    <molecule id="Q8IWV2-3"/>
    <property type="nucleotide sequence ID" value="NM_001206956.2"/>
</dbReference>
<dbReference type="RefSeq" id="NP_001337024.1">
    <molecule id="Q8IWV2-1"/>
    <property type="nucleotide sequence ID" value="NM_001350095.2"/>
</dbReference>
<dbReference type="RefSeq" id="NP_783200.1">
    <molecule id="Q8IWV2-1"/>
    <property type="nucleotide sequence ID" value="NM_175607.3"/>
</dbReference>
<dbReference type="RefSeq" id="NP_783302.1">
    <molecule id="Q8IWV2-4"/>
    <property type="nucleotide sequence ID" value="NM_175613.3"/>
</dbReference>
<dbReference type="RefSeq" id="XP_011531727.1">
    <molecule id="Q8IWV2-1"/>
    <property type="nucleotide sequence ID" value="XM_011533425.4"/>
</dbReference>
<dbReference type="RefSeq" id="XP_011531728.1">
    <property type="nucleotide sequence ID" value="XM_011533426.2"/>
</dbReference>
<dbReference type="RefSeq" id="XP_011531729.1">
    <molecule id="Q8IWV2-1"/>
    <property type="nucleotide sequence ID" value="XM_011533427.3"/>
</dbReference>
<dbReference type="RefSeq" id="XP_011531730.1">
    <molecule id="Q8IWV2-1"/>
    <property type="nucleotide sequence ID" value="XM_011533428.3"/>
</dbReference>
<dbReference type="RefSeq" id="XP_011531731.1">
    <molecule id="Q8IWV2-1"/>
    <property type="nucleotide sequence ID" value="XM_011533429.3"/>
</dbReference>
<dbReference type="RefSeq" id="XP_011531732.1">
    <molecule id="Q8IWV2-1"/>
    <property type="nucleotide sequence ID" value="XM_011533430.3"/>
</dbReference>
<dbReference type="RefSeq" id="XP_016861271.1">
    <molecule id="Q8IWV2-1"/>
    <property type="nucleotide sequence ID" value="XM_017005782.2"/>
</dbReference>
<dbReference type="RefSeq" id="XP_016861272.1">
    <molecule id="Q8IWV2-1"/>
    <property type="nucleotide sequence ID" value="XM_017005783.2"/>
</dbReference>
<dbReference type="RefSeq" id="XP_016861273.1">
    <molecule id="Q8IWV2-1"/>
    <property type="nucleotide sequence ID" value="XM_017005784.3"/>
</dbReference>
<dbReference type="RefSeq" id="XP_047303472.1">
    <molecule id="Q8IWV2-1"/>
    <property type="nucleotide sequence ID" value="XM_047447516.1"/>
</dbReference>
<dbReference type="RefSeq" id="XP_047303473.1">
    <molecule id="Q8IWV2-1"/>
    <property type="nucleotide sequence ID" value="XM_047447517.1"/>
</dbReference>
<dbReference type="RefSeq" id="XP_047303474.1">
    <molecule id="Q8IWV2-1"/>
    <property type="nucleotide sequence ID" value="XM_047447518.1"/>
</dbReference>
<dbReference type="RefSeq" id="XP_047303475.1">
    <molecule id="Q8IWV2-1"/>
    <property type="nucleotide sequence ID" value="XM_047447519.1"/>
</dbReference>
<dbReference type="RefSeq" id="XP_047303476.1">
    <molecule id="Q8IWV2-1"/>
    <property type="nucleotide sequence ID" value="XM_047447520.1"/>
</dbReference>
<dbReference type="RefSeq" id="XP_047303477.1">
    <molecule id="Q8IWV2-1"/>
    <property type="nucleotide sequence ID" value="XM_047447521.1"/>
</dbReference>
<dbReference type="RefSeq" id="XP_047303478.1">
    <molecule id="Q8IWV2-1"/>
    <property type="nucleotide sequence ID" value="XM_047447522.1"/>
</dbReference>
<dbReference type="RefSeq" id="XP_047303479.1">
    <molecule id="Q8IWV2-1"/>
    <property type="nucleotide sequence ID" value="XM_047447523.1"/>
</dbReference>
<dbReference type="RefSeq" id="XP_047303480.1">
    <molecule id="Q8IWV2-1"/>
    <property type="nucleotide sequence ID" value="XM_047447524.1"/>
</dbReference>
<dbReference type="RefSeq" id="XP_047303481.1">
    <molecule id="Q8IWV2-1"/>
    <property type="nucleotide sequence ID" value="XM_047447525.1"/>
</dbReference>
<dbReference type="RefSeq" id="XP_047303482.1">
    <molecule id="Q8IWV2-1"/>
    <property type="nucleotide sequence ID" value="XM_047447526.1"/>
</dbReference>
<dbReference type="RefSeq" id="XP_047303483.1">
    <molecule id="Q8IWV2-1"/>
    <property type="nucleotide sequence ID" value="XM_047447527.1"/>
</dbReference>
<dbReference type="RefSeq" id="XP_047303484.1">
    <molecule id="Q8IWV2-1"/>
    <property type="nucleotide sequence ID" value="XM_047447528.1"/>
</dbReference>
<dbReference type="RefSeq" id="XP_047303485.1">
    <molecule id="Q8IWV2-1"/>
    <property type="nucleotide sequence ID" value="XM_047447529.1"/>
</dbReference>
<dbReference type="RefSeq" id="XP_047303486.1">
    <molecule id="Q8IWV2-1"/>
    <property type="nucleotide sequence ID" value="XM_047447530.1"/>
</dbReference>
<dbReference type="RefSeq" id="XP_047303487.1">
    <molecule id="Q8IWV2-1"/>
    <property type="nucleotide sequence ID" value="XM_047447531.1"/>
</dbReference>
<dbReference type="RefSeq" id="XP_047303488.1">
    <molecule id="Q8IWV2-1"/>
    <property type="nucleotide sequence ID" value="XM_047447532.1"/>
</dbReference>
<dbReference type="RefSeq" id="XP_047303489.1">
    <molecule id="Q8IWV2-1"/>
    <property type="nucleotide sequence ID" value="XM_047447533.1"/>
</dbReference>
<dbReference type="RefSeq" id="XP_047303490.1">
    <molecule id="Q8IWV2-1"/>
    <property type="nucleotide sequence ID" value="XM_047447534.1"/>
</dbReference>
<dbReference type="RefSeq" id="XP_054201374.1">
    <molecule id="Q8IWV2-1"/>
    <property type="nucleotide sequence ID" value="XM_054345399.1"/>
</dbReference>
<dbReference type="RefSeq" id="XP_054201375.1">
    <molecule id="Q8IWV2-1"/>
    <property type="nucleotide sequence ID" value="XM_054345400.1"/>
</dbReference>
<dbReference type="RefSeq" id="XP_054201376.1">
    <molecule id="Q8IWV2-1"/>
    <property type="nucleotide sequence ID" value="XM_054345401.1"/>
</dbReference>
<dbReference type="RefSeq" id="XP_054201377.1">
    <molecule id="Q8IWV2-1"/>
    <property type="nucleotide sequence ID" value="XM_054345402.1"/>
</dbReference>
<dbReference type="RefSeq" id="XP_054201378.1">
    <molecule id="Q8IWV2-1"/>
    <property type="nucleotide sequence ID" value="XM_054345403.1"/>
</dbReference>
<dbReference type="RefSeq" id="XP_054201379.1">
    <molecule id="Q8IWV2-1"/>
    <property type="nucleotide sequence ID" value="XM_054345404.1"/>
</dbReference>
<dbReference type="RefSeq" id="XP_054201380.1">
    <molecule id="Q8IWV2-1"/>
    <property type="nucleotide sequence ID" value="XM_054345405.1"/>
</dbReference>
<dbReference type="RefSeq" id="XP_054201381.1">
    <molecule id="Q8IWV2-1"/>
    <property type="nucleotide sequence ID" value="XM_054345406.1"/>
</dbReference>
<dbReference type="RefSeq" id="XP_054201382.1">
    <molecule id="Q8IWV2-1"/>
    <property type="nucleotide sequence ID" value="XM_054345407.1"/>
</dbReference>
<dbReference type="RefSeq" id="XP_054201383.1">
    <molecule id="Q8IWV2-1"/>
    <property type="nucleotide sequence ID" value="XM_054345408.1"/>
</dbReference>
<dbReference type="RefSeq" id="XP_054201384.1">
    <molecule id="Q8IWV2-1"/>
    <property type="nucleotide sequence ID" value="XM_054345409.1"/>
</dbReference>
<dbReference type="RefSeq" id="XP_054201385.1">
    <molecule id="Q8IWV2-1"/>
    <property type="nucleotide sequence ID" value="XM_054345410.1"/>
</dbReference>
<dbReference type="RefSeq" id="XP_054201386.1">
    <molecule id="Q8IWV2-1"/>
    <property type="nucleotide sequence ID" value="XM_054345411.1"/>
</dbReference>
<dbReference type="RefSeq" id="XP_054201387.1">
    <molecule id="Q8IWV2-1"/>
    <property type="nucleotide sequence ID" value="XM_054345412.1"/>
</dbReference>
<dbReference type="RefSeq" id="XP_054201388.1">
    <molecule id="Q8IWV2-1"/>
    <property type="nucleotide sequence ID" value="XM_054345413.1"/>
</dbReference>
<dbReference type="RefSeq" id="XP_054201389.1">
    <molecule id="Q8IWV2-1"/>
    <property type="nucleotide sequence ID" value="XM_054345414.1"/>
</dbReference>
<dbReference type="RefSeq" id="XP_054201390.1">
    <molecule id="Q8IWV2-1"/>
    <property type="nucleotide sequence ID" value="XM_054345415.1"/>
</dbReference>
<dbReference type="SMR" id="Q8IWV2"/>
<dbReference type="BioGRID" id="127444">
    <property type="interactions" value="7"/>
</dbReference>
<dbReference type="FunCoup" id="Q8IWV2">
    <property type="interactions" value="669"/>
</dbReference>
<dbReference type="IntAct" id="Q8IWV2">
    <property type="interactions" value="6"/>
</dbReference>
<dbReference type="STRING" id="9606.ENSP00000380602"/>
<dbReference type="GlyConnect" id="1156">
    <property type="glycosylation" value="25 N-Linked glycans (7 sites)"/>
</dbReference>
<dbReference type="GlyCosmos" id="Q8IWV2">
    <property type="glycosylation" value="14 sites, 27 glycans"/>
</dbReference>
<dbReference type="GlyGen" id="Q8IWV2">
    <property type="glycosylation" value="14 sites, 32 N-linked glycans (8 sites)"/>
</dbReference>
<dbReference type="iPTMnet" id="Q8IWV2"/>
<dbReference type="PhosphoSitePlus" id="Q8IWV2"/>
<dbReference type="BioMuta" id="CNTN4"/>
<dbReference type="DMDM" id="55976529"/>
<dbReference type="jPOST" id="Q8IWV2"/>
<dbReference type="MassIVE" id="Q8IWV2"/>
<dbReference type="PaxDb" id="9606-ENSP00000380602"/>
<dbReference type="PeptideAtlas" id="Q8IWV2"/>
<dbReference type="ProteomicsDB" id="3420"/>
<dbReference type="ProteomicsDB" id="70904">
    <molecule id="Q8IWV2-1"/>
</dbReference>
<dbReference type="ProteomicsDB" id="70905">
    <molecule id="Q8IWV2-2"/>
</dbReference>
<dbReference type="ProteomicsDB" id="70906">
    <molecule id="Q8IWV2-3"/>
</dbReference>
<dbReference type="Antibodypedia" id="9906">
    <property type="antibodies" value="189 antibodies from 30 providers"/>
</dbReference>
<dbReference type="DNASU" id="152330"/>
<dbReference type="Ensembl" id="ENST00000397459.6">
    <molecule id="Q8IWV2-4"/>
    <property type="protein sequence ID" value="ENSP00000380600.2"/>
    <property type="gene ID" value="ENSG00000144619.15"/>
</dbReference>
<dbReference type="Ensembl" id="ENST00000397461.5">
    <molecule id="Q8IWV2-1"/>
    <property type="protein sequence ID" value="ENSP00000380602.1"/>
    <property type="gene ID" value="ENSG00000144619.15"/>
</dbReference>
<dbReference type="Ensembl" id="ENST00000418658.6">
    <molecule id="Q8IWV2-1"/>
    <property type="protein sequence ID" value="ENSP00000396010.1"/>
    <property type="gene ID" value="ENSG00000144619.15"/>
</dbReference>
<dbReference type="Ensembl" id="ENST00000427331.5">
    <molecule id="Q8IWV2-1"/>
    <property type="protein sequence ID" value="ENSP00000413642.1"/>
    <property type="gene ID" value="ENSG00000144619.15"/>
</dbReference>
<dbReference type="GeneID" id="152330"/>
<dbReference type="KEGG" id="hsa:152330"/>
<dbReference type="MANE-Select" id="ENST00000418658.6">
    <property type="protein sequence ID" value="ENSP00000396010.1"/>
    <property type="RefSeq nucleotide sequence ID" value="NM_175607.3"/>
    <property type="RefSeq protein sequence ID" value="NP_783200.1"/>
</dbReference>
<dbReference type="UCSC" id="uc003bpc.4">
    <molecule id="Q8IWV2-1"/>
    <property type="organism name" value="human"/>
</dbReference>
<dbReference type="AGR" id="HGNC:2174"/>
<dbReference type="CTD" id="152330"/>
<dbReference type="DisGeNET" id="152330"/>
<dbReference type="GeneCards" id="CNTN4"/>
<dbReference type="HGNC" id="HGNC:2174">
    <property type="gene designation" value="CNTN4"/>
</dbReference>
<dbReference type="HPA" id="ENSG00000144619">
    <property type="expression patterns" value="Tissue enhanced (parathyroid gland, retina)"/>
</dbReference>
<dbReference type="MalaCards" id="CNTN4"/>
<dbReference type="MIM" id="607280">
    <property type="type" value="gene"/>
</dbReference>
<dbReference type="neXtProt" id="NX_Q8IWV2"/>
<dbReference type="OpenTargets" id="ENSG00000144619"/>
<dbReference type="PharmGKB" id="PA26688"/>
<dbReference type="VEuPathDB" id="HostDB:ENSG00000144619"/>
<dbReference type="eggNOG" id="KOG3513">
    <property type="taxonomic scope" value="Eukaryota"/>
</dbReference>
<dbReference type="GeneTree" id="ENSGT00940000155198"/>
<dbReference type="HOGENOM" id="CLU_005756_0_0_1"/>
<dbReference type="InParanoid" id="Q8IWV2"/>
<dbReference type="OMA" id="RIQGYEX"/>
<dbReference type="OrthoDB" id="5982258at2759"/>
<dbReference type="PAN-GO" id="Q8IWV2">
    <property type="GO annotations" value="6 GO annotations based on evolutionary models"/>
</dbReference>
<dbReference type="PhylomeDB" id="Q8IWV2"/>
<dbReference type="TreeFam" id="TF351103"/>
<dbReference type="PathwayCommons" id="Q8IWV2"/>
<dbReference type="Reactome" id="R-HSA-163125">
    <property type="pathway name" value="Post-translational modification: synthesis of GPI-anchored proteins"/>
</dbReference>
<dbReference type="SignaLink" id="Q8IWV2"/>
<dbReference type="BioGRID-ORCS" id="152330">
    <property type="hits" value="12 hits in 1146 CRISPR screens"/>
</dbReference>
<dbReference type="ChiTaRS" id="CNTN4">
    <property type="organism name" value="human"/>
</dbReference>
<dbReference type="GeneWiki" id="CNTN4"/>
<dbReference type="GenomeRNAi" id="152330"/>
<dbReference type="Pharos" id="Q8IWV2">
    <property type="development level" value="Tbio"/>
</dbReference>
<dbReference type="PRO" id="PR:Q8IWV2"/>
<dbReference type="Proteomes" id="UP000005640">
    <property type="component" value="Chromosome 3"/>
</dbReference>
<dbReference type="RNAct" id="Q8IWV2">
    <property type="molecule type" value="protein"/>
</dbReference>
<dbReference type="Bgee" id="ENSG00000144619">
    <property type="expression patterns" value="Expressed in sperm and 154 other cell types or tissues"/>
</dbReference>
<dbReference type="ExpressionAtlas" id="Q8IWV2">
    <property type="expression patterns" value="baseline and differential"/>
</dbReference>
<dbReference type="GO" id="GO:0030424">
    <property type="term" value="C:axon"/>
    <property type="evidence" value="ECO:0000318"/>
    <property type="project" value="GO_Central"/>
</dbReference>
<dbReference type="GO" id="GO:0005576">
    <property type="term" value="C:extracellular region"/>
    <property type="evidence" value="ECO:0000304"/>
    <property type="project" value="Reactome"/>
</dbReference>
<dbReference type="GO" id="GO:0005886">
    <property type="term" value="C:plasma membrane"/>
    <property type="evidence" value="ECO:0000318"/>
    <property type="project" value="GO_Central"/>
</dbReference>
<dbReference type="GO" id="GO:0098552">
    <property type="term" value="C:side of membrane"/>
    <property type="evidence" value="ECO:0007669"/>
    <property type="project" value="UniProtKB-KW"/>
</dbReference>
<dbReference type="GO" id="GO:0045202">
    <property type="term" value="C:synapse"/>
    <property type="evidence" value="ECO:0000318"/>
    <property type="project" value="GO_Central"/>
</dbReference>
<dbReference type="GO" id="GO:0098632">
    <property type="term" value="F:cell-cell adhesion mediator activity"/>
    <property type="evidence" value="ECO:0000318"/>
    <property type="project" value="GO_Central"/>
</dbReference>
<dbReference type="GO" id="GO:0007411">
    <property type="term" value="P:axon guidance"/>
    <property type="evidence" value="ECO:0000318"/>
    <property type="project" value="GO_Central"/>
</dbReference>
<dbReference type="GO" id="GO:0007413">
    <property type="term" value="P:axonal fasciculation"/>
    <property type="evidence" value="ECO:0000304"/>
    <property type="project" value="UniProtKB"/>
</dbReference>
<dbReference type="GO" id="GO:0007409">
    <property type="term" value="P:axonogenesis"/>
    <property type="evidence" value="ECO:0000304"/>
    <property type="project" value="UniProtKB"/>
</dbReference>
<dbReference type="GO" id="GO:0007420">
    <property type="term" value="P:brain development"/>
    <property type="evidence" value="ECO:0000250"/>
    <property type="project" value="UniProtKB"/>
</dbReference>
<dbReference type="GO" id="GO:0070593">
    <property type="term" value="P:dendrite self-avoidance"/>
    <property type="evidence" value="ECO:0000318"/>
    <property type="project" value="GO_Central"/>
</dbReference>
<dbReference type="GO" id="GO:0007156">
    <property type="term" value="P:homophilic cell adhesion via plasma membrane adhesion molecules"/>
    <property type="evidence" value="ECO:0000318"/>
    <property type="project" value="GO_Central"/>
</dbReference>
<dbReference type="GO" id="GO:0045665">
    <property type="term" value="P:negative regulation of neuron differentiation"/>
    <property type="evidence" value="ECO:0000315"/>
    <property type="project" value="UniProtKB"/>
</dbReference>
<dbReference type="GO" id="GO:0007399">
    <property type="term" value="P:nervous system development"/>
    <property type="evidence" value="ECO:0000315"/>
    <property type="project" value="UniProtKB"/>
</dbReference>
<dbReference type="GO" id="GO:0007158">
    <property type="term" value="P:neuron cell-cell adhesion"/>
    <property type="evidence" value="ECO:0000304"/>
    <property type="project" value="UniProtKB"/>
</dbReference>
<dbReference type="GO" id="GO:0031175">
    <property type="term" value="P:neuron projection development"/>
    <property type="evidence" value="ECO:0000250"/>
    <property type="project" value="UniProtKB"/>
</dbReference>
<dbReference type="GO" id="GO:0048167">
    <property type="term" value="P:regulation of synaptic plasticity"/>
    <property type="evidence" value="ECO:0000304"/>
    <property type="project" value="UniProtKB"/>
</dbReference>
<dbReference type="GO" id="GO:0050808">
    <property type="term" value="P:synapse organization"/>
    <property type="evidence" value="ECO:0000318"/>
    <property type="project" value="GO_Central"/>
</dbReference>
<dbReference type="CDD" id="cd00063">
    <property type="entry name" value="FN3"/>
    <property type="match status" value="4"/>
</dbReference>
<dbReference type="CDD" id="cd05853">
    <property type="entry name" value="Ig6_Contactin-4"/>
    <property type="match status" value="1"/>
</dbReference>
<dbReference type="FunFam" id="2.60.40.10:FF:000035">
    <property type="entry name" value="Contactin 1"/>
    <property type="match status" value="1"/>
</dbReference>
<dbReference type="FunFam" id="2.60.40.10:FF:000044">
    <property type="entry name" value="Contactin 1"/>
    <property type="match status" value="1"/>
</dbReference>
<dbReference type="FunFam" id="2.60.40.10:FF:000047">
    <property type="entry name" value="Contactin 1"/>
    <property type="match status" value="1"/>
</dbReference>
<dbReference type="FunFam" id="2.60.40.10:FF:000052">
    <property type="entry name" value="Contactin 1"/>
    <property type="match status" value="1"/>
</dbReference>
<dbReference type="FunFam" id="2.60.40.10:FF:000054">
    <property type="entry name" value="Contactin 1"/>
    <property type="match status" value="1"/>
</dbReference>
<dbReference type="FunFam" id="2.60.40.10:FF:000064">
    <property type="entry name" value="Contactin 1"/>
    <property type="match status" value="1"/>
</dbReference>
<dbReference type="FunFam" id="2.60.40.10:FF:000004">
    <property type="entry name" value="DCC isoform 1"/>
    <property type="match status" value="2"/>
</dbReference>
<dbReference type="FunFam" id="2.60.40.10:FF:000005">
    <property type="entry name" value="Neuronal cell adhesion molecule"/>
    <property type="match status" value="1"/>
</dbReference>
<dbReference type="FunFam" id="2.60.40.10:FF:000028">
    <property type="entry name" value="Neuronal cell adhesion molecule"/>
    <property type="match status" value="1"/>
</dbReference>
<dbReference type="Gene3D" id="2.60.40.10">
    <property type="entry name" value="Immunoglobulins"/>
    <property type="match status" value="10"/>
</dbReference>
<dbReference type="InterPro" id="IPR033007">
    <property type="entry name" value="CNTN4_Ig6"/>
</dbReference>
<dbReference type="InterPro" id="IPR003961">
    <property type="entry name" value="FN3_dom"/>
</dbReference>
<dbReference type="InterPro" id="IPR036116">
    <property type="entry name" value="FN3_sf"/>
</dbReference>
<dbReference type="InterPro" id="IPR007110">
    <property type="entry name" value="Ig-like_dom"/>
</dbReference>
<dbReference type="InterPro" id="IPR036179">
    <property type="entry name" value="Ig-like_dom_sf"/>
</dbReference>
<dbReference type="InterPro" id="IPR013783">
    <property type="entry name" value="Ig-like_fold"/>
</dbReference>
<dbReference type="InterPro" id="IPR013098">
    <property type="entry name" value="Ig_I-set"/>
</dbReference>
<dbReference type="InterPro" id="IPR003599">
    <property type="entry name" value="Ig_sub"/>
</dbReference>
<dbReference type="InterPro" id="IPR003598">
    <property type="entry name" value="Ig_sub2"/>
</dbReference>
<dbReference type="PANTHER" id="PTHR44170:SF18">
    <property type="entry name" value="CONTACTIN 3B-RELATED"/>
    <property type="match status" value="1"/>
</dbReference>
<dbReference type="PANTHER" id="PTHR44170">
    <property type="entry name" value="PROTEIN SIDEKICK"/>
    <property type="match status" value="1"/>
</dbReference>
<dbReference type="Pfam" id="PF00041">
    <property type="entry name" value="fn3"/>
    <property type="match status" value="2"/>
</dbReference>
<dbReference type="Pfam" id="PF07679">
    <property type="entry name" value="I-set"/>
    <property type="match status" value="3"/>
</dbReference>
<dbReference type="Pfam" id="PF13927">
    <property type="entry name" value="Ig_3"/>
    <property type="match status" value="3"/>
</dbReference>
<dbReference type="SMART" id="SM00060">
    <property type="entry name" value="FN3"/>
    <property type="match status" value="4"/>
</dbReference>
<dbReference type="SMART" id="SM00409">
    <property type="entry name" value="IG"/>
    <property type="match status" value="6"/>
</dbReference>
<dbReference type="SMART" id="SM00408">
    <property type="entry name" value="IGc2"/>
    <property type="match status" value="5"/>
</dbReference>
<dbReference type="SUPFAM" id="SSF49265">
    <property type="entry name" value="Fibronectin type III"/>
    <property type="match status" value="2"/>
</dbReference>
<dbReference type="SUPFAM" id="SSF48726">
    <property type="entry name" value="Immunoglobulin"/>
    <property type="match status" value="6"/>
</dbReference>
<dbReference type="PROSITE" id="PS50853">
    <property type="entry name" value="FN3"/>
    <property type="match status" value="4"/>
</dbReference>
<dbReference type="PROSITE" id="PS50835">
    <property type="entry name" value="IG_LIKE"/>
    <property type="match status" value="6"/>
</dbReference>
<protein>
    <recommendedName>
        <fullName>Contactin-4</fullName>
    </recommendedName>
    <alternativeName>
        <fullName>Brain-derived immunoglobulin superfamily protein 2</fullName>
        <shortName>BIG-2</shortName>
    </alternativeName>
</protein>
<organism>
    <name type="scientific">Homo sapiens</name>
    <name type="common">Human</name>
    <dbReference type="NCBI Taxonomy" id="9606"/>
    <lineage>
        <taxon>Eukaryota</taxon>
        <taxon>Metazoa</taxon>
        <taxon>Chordata</taxon>
        <taxon>Craniata</taxon>
        <taxon>Vertebrata</taxon>
        <taxon>Euteleostomi</taxon>
        <taxon>Mammalia</taxon>
        <taxon>Eutheria</taxon>
        <taxon>Euarchontoglires</taxon>
        <taxon>Primates</taxon>
        <taxon>Haplorrhini</taxon>
        <taxon>Catarrhini</taxon>
        <taxon>Hominidae</taxon>
        <taxon>Homo</taxon>
    </lineage>
</organism>
<proteinExistence type="evidence at protein level"/>
<gene>
    <name type="primary">CNTN4</name>
</gene>
<name>CNTN4_HUMAN</name>
<feature type="signal peptide" evidence="2">
    <location>
        <begin position="1"/>
        <end position="18"/>
    </location>
</feature>
<feature type="chain" id="PRO_0000014711" description="Contactin-4">
    <location>
        <begin position="19"/>
        <end position="1000"/>
    </location>
</feature>
<feature type="propeptide" id="PRO_0000014712" description="Removed in mature form" evidence="2">
    <location>
        <begin position="1001"/>
        <end position="1026"/>
    </location>
</feature>
<feature type="domain" description="Ig-like C2-type 1">
    <location>
        <begin position="32"/>
        <end position="117"/>
    </location>
</feature>
<feature type="domain" description="Ig-like C2-type 2">
    <location>
        <begin position="122"/>
        <end position="207"/>
    </location>
</feature>
<feature type="domain" description="Ig-like C2-type 3">
    <location>
        <begin position="225"/>
        <end position="311"/>
    </location>
</feature>
<feature type="domain" description="Ig-like C2-type 4">
    <location>
        <begin position="316"/>
        <end position="400"/>
    </location>
</feature>
<feature type="domain" description="Ig-like C2-type 5">
    <location>
        <begin position="406"/>
        <end position="493"/>
    </location>
</feature>
<feature type="domain" description="Ig-like C2-type 6">
    <location>
        <begin position="497"/>
        <end position="586"/>
    </location>
</feature>
<feature type="domain" description="Fibronectin type-III 1" evidence="4">
    <location>
        <begin position="599"/>
        <end position="697"/>
    </location>
</feature>
<feature type="domain" description="Fibronectin type-III 2" evidence="4">
    <location>
        <begin position="702"/>
        <end position="799"/>
    </location>
</feature>
<feature type="domain" description="Fibronectin type-III 3" evidence="4">
    <location>
        <begin position="804"/>
        <end position="899"/>
    </location>
</feature>
<feature type="domain" description="Fibronectin type-III 4" evidence="4">
    <location>
        <begin position="900"/>
        <end position="995"/>
    </location>
</feature>
<feature type="region of interest" description="Disordered" evidence="5">
    <location>
        <begin position="685"/>
        <end position="710"/>
    </location>
</feature>
<feature type="region of interest" description="Disordered" evidence="5">
    <location>
        <begin position="886"/>
        <end position="907"/>
    </location>
</feature>
<feature type="compositionally biased region" description="Basic and acidic residues" evidence="5">
    <location>
        <begin position="687"/>
        <end position="696"/>
    </location>
</feature>
<feature type="compositionally biased region" description="Polar residues" evidence="5">
    <location>
        <begin position="886"/>
        <end position="896"/>
    </location>
</feature>
<feature type="lipid moiety-binding region" description="GPI-anchor amidated serine" evidence="2">
    <location>
        <position position="1000"/>
    </location>
</feature>
<feature type="glycosylation site" description="N-linked (GlcNAc...) asparagine" evidence="9">
    <location>
        <position position="65"/>
    </location>
</feature>
<feature type="glycosylation site" description="N-linked (GlcNAc...) asparagine" evidence="2">
    <location>
        <position position="90"/>
    </location>
</feature>
<feature type="glycosylation site" description="N-linked (GlcNAc...) asparagine" evidence="2">
    <location>
        <position position="191"/>
    </location>
</feature>
<feature type="glycosylation site" description="N-linked (GlcNAc...) asparagine" evidence="2">
    <location>
        <position position="370"/>
    </location>
</feature>
<feature type="glycosylation site" description="N-linked (GlcNAc...) asparagine" evidence="2">
    <location>
        <position position="375"/>
    </location>
</feature>
<feature type="glycosylation site" description="N-linked (GlcNAc...) asparagine" evidence="2">
    <location>
        <position position="466"/>
    </location>
</feature>
<feature type="glycosylation site" description="N-linked (GlcNAc...) asparagine" evidence="2">
    <location>
        <position position="705"/>
    </location>
</feature>
<feature type="glycosylation site" description="N-linked (GlcNAc...) asparagine" evidence="2">
    <location>
        <position position="764"/>
    </location>
</feature>
<feature type="glycosylation site" description="N-linked (GlcNAc...) asparagine" evidence="2">
    <location>
        <position position="858"/>
    </location>
</feature>
<feature type="glycosylation site" description="N-linked (GlcNAc...) asparagine" evidence="2">
    <location>
        <position position="893"/>
    </location>
</feature>
<feature type="glycosylation site" description="N-linked (GlcNAc...) asparagine" evidence="2">
    <location>
        <position position="911"/>
    </location>
</feature>
<feature type="glycosylation site" description="N-linked (GlcNAc...) asparagine" evidence="2">
    <location>
        <position position="929"/>
    </location>
</feature>
<feature type="glycosylation site" description="N-linked (GlcNAc...) asparagine" evidence="2">
    <location>
        <position position="954"/>
    </location>
</feature>
<feature type="disulfide bond" evidence="3">
    <location>
        <begin position="50"/>
        <end position="100"/>
    </location>
</feature>
<feature type="disulfide bond" evidence="3">
    <location>
        <begin position="144"/>
        <end position="194"/>
    </location>
</feature>
<feature type="disulfide bond" evidence="3">
    <location>
        <begin position="247"/>
        <end position="295"/>
    </location>
</feature>
<feature type="disulfide bond" evidence="3">
    <location>
        <begin position="337"/>
        <end position="384"/>
    </location>
</feature>
<feature type="disulfide bond" evidence="3">
    <location>
        <begin position="429"/>
        <end position="477"/>
    </location>
</feature>
<feature type="disulfide bond" evidence="3">
    <location>
        <begin position="519"/>
        <end position="576"/>
    </location>
</feature>
<feature type="splice variant" id="VSP_011961" description="In isoform 2." evidence="12">
    <location>
        <begin position="1"/>
        <end position="744"/>
    </location>
</feature>
<feature type="splice variant" id="VSP_044270" description="In isoform 3 and isoform 4." evidence="13 14">
    <location>
        <begin position="1"/>
        <end position="328"/>
    </location>
</feature>
<feature type="splice variant" id="VSP_011962" description="In isoform 3." evidence="15">
    <location>
        <position position="555"/>
    </location>
</feature>
<feature type="sequence variant" id="VAR_035507" description="In a colorectal cancer sample; somatic mutation." evidence="10">
    <original>T</original>
    <variation>P</variation>
    <location>
        <position position="176"/>
    </location>
</feature>
<feature type="sequence variant" id="VAR_035508" description="In a colorectal cancer sample; somatic mutation." evidence="10">
    <original>K</original>
    <variation>N</variation>
    <location>
        <position position="420"/>
    </location>
</feature>
<comment type="function">
    <text>Contactins mediate cell surface interactions during nervous system development. Has some neurite outgrowth-promoting activity. May be involved in synaptogenesis.</text>
</comment>
<comment type="subunit">
    <text evidence="11">Interacts with PTPRG.</text>
</comment>
<comment type="subcellular location">
    <subcellularLocation>
        <location>Cell membrane</location>
        <topology>Lipid-anchor</topology>
        <topology>GPI-anchor</topology>
    </subcellularLocation>
    <subcellularLocation>
        <location evidence="1">Secreted</location>
    </subcellularLocation>
</comment>
<comment type="alternative products">
    <event type="alternative splicing"/>
    <isoform>
        <id>Q8IWV2-1</id>
        <name>1</name>
        <sequence type="displayed"/>
    </isoform>
    <isoform>
        <id>Q8IWV2-2</id>
        <name>2</name>
        <name>CNTN4A</name>
        <sequence type="described" ref="VSP_011961"/>
    </isoform>
    <isoform>
        <id>Q8IWV2-3</id>
        <name>3</name>
        <sequence type="described" ref="VSP_044270 VSP_011962"/>
    </isoform>
    <isoform>
        <id>Q8IWV2-4</id>
        <name>4</name>
        <sequence type="described" ref="VSP_044270"/>
    </isoform>
</comment>
<comment type="tissue specificity">
    <text evidence="6 7">Mainly expressed in brain. Highly expressed in cerebellum and weakly expressed in corpus callosum, caudate nucleus, amygdala and spinal cord. Also expressed in testis, pancreas, thyroid, uterus, small intestine and kidney. Not expressed in skeletal muscle. Isoform 2 is weakly expressed in cerebral cortex.</text>
</comment>
<comment type="induction">
    <text evidence="7">By retinoic acid, suggesting that it may act in response to differentiating agents.</text>
</comment>
<comment type="disease">
    <text evidence="8">A chromosomal aberration involving CNTN4 has been found in a boy with characteristic physical features of 3p deletion syndrome (3PDS). Translocation t(3;10)(p26;q26). 3PDS is a rare contiguous gene disorder involving the loss of the telomeric portion of the short arm of chromosome 3 and characterized by developmental delay, growth retardation, and dysmorphic features.</text>
</comment>
<comment type="similarity">
    <text evidence="15">Belongs to the immunoglobulin superfamily. Contactin family.</text>
</comment>
<reference key="1">
    <citation type="journal article" date="2002" name="J. Hum. Genet.">
        <title>A novel splice variant of the cell adhesion molecule contactin 4 (CNTN4) is mainly expressed in human brain.</title>
        <authorList>
            <person name="Zeng L."/>
            <person name="Zhang C."/>
            <person name="Xu J."/>
            <person name="Ye X."/>
            <person name="Wu Q."/>
            <person name="Dai J."/>
            <person name="Ji C."/>
            <person name="Gu S."/>
            <person name="Xie Y."/>
            <person name="Mao Y."/>
        </authorList>
    </citation>
    <scope>NUCLEOTIDE SEQUENCE [MRNA] (ISOFORMS 1 AND 2)</scope>
</reference>
<reference key="2">
    <citation type="journal article" date="2003" name="Cytogenet. Genome Res.">
        <title>Cloning and characterization of the human neural cell adhesion molecule, CNTN4 (alias BIG-2).</title>
        <authorList>
            <person name="Hansford L.M."/>
            <person name="Smith S.A."/>
            <person name="Haber M."/>
            <person name="Norris M.D."/>
            <person name="Cheung B."/>
            <person name="Marshall G.M."/>
        </authorList>
    </citation>
    <scope>NUCLEOTIDE SEQUENCE [MRNA] (ISOFORM 1)</scope>
    <scope>TISSUE SPECIFICITY</scope>
    <scope>INDUCTION</scope>
</reference>
<reference key="3">
    <citation type="journal article" date="2004" name="Nat. Genet.">
        <title>Complete sequencing and characterization of 21,243 full-length human cDNAs.</title>
        <authorList>
            <person name="Ota T."/>
            <person name="Suzuki Y."/>
            <person name="Nishikawa T."/>
            <person name="Otsuki T."/>
            <person name="Sugiyama T."/>
            <person name="Irie R."/>
            <person name="Wakamatsu A."/>
            <person name="Hayashi K."/>
            <person name="Sato H."/>
            <person name="Nagai K."/>
            <person name="Kimura K."/>
            <person name="Makita H."/>
            <person name="Sekine M."/>
            <person name="Obayashi M."/>
            <person name="Nishi T."/>
            <person name="Shibahara T."/>
            <person name="Tanaka T."/>
            <person name="Ishii S."/>
            <person name="Yamamoto J."/>
            <person name="Saito K."/>
            <person name="Kawai Y."/>
            <person name="Isono Y."/>
            <person name="Nakamura Y."/>
            <person name="Nagahari K."/>
            <person name="Murakami K."/>
            <person name="Yasuda T."/>
            <person name="Iwayanagi T."/>
            <person name="Wagatsuma M."/>
            <person name="Shiratori A."/>
            <person name="Sudo H."/>
            <person name="Hosoiri T."/>
            <person name="Kaku Y."/>
            <person name="Kodaira H."/>
            <person name="Kondo H."/>
            <person name="Sugawara M."/>
            <person name="Takahashi M."/>
            <person name="Kanda K."/>
            <person name="Yokoi T."/>
            <person name="Furuya T."/>
            <person name="Kikkawa E."/>
            <person name="Omura Y."/>
            <person name="Abe K."/>
            <person name="Kamihara K."/>
            <person name="Katsuta N."/>
            <person name="Sato K."/>
            <person name="Tanikawa M."/>
            <person name="Yamazaki M."/>
            <person name="Ninomiya K."/>
            <person name="Ishibashi T."/>
            <person name="Yamashita H."/>
            <person name="Murakawa K."/>
            <person name="Fujimori K."/>
            <person name="Tanai H."/>
            <person name="Kimata M."/>
            <person name="Watanabe M."/>
            <person name="Hiraoka S."/>
            <person name="Chiba Y."/>
            <person name="Ishida S."/>
            <person name="Ono Y."/>
            <person name="Takiguchi S."/>
            <person name="Watanabe S."/>
            <person name="Yosida M."/>
            <person name="Hotuta T."/>
            <person name="Kusano J."/>
            <person name="Kanehori K."/>
            <person name="Takahashi-Fujii A."/>
            <person name="Hara H."/>
            <person name="Tanase T.-O."/>
            <person name="Nomura Y."/>
            <person name="Togiya S."/>
            <person name="Komai F."/>
            <person name="Hara R."/>
            <person name="Takeuchi K."/>
            <person name="Arita M."/>
            <person name="Imose N."/>
            <person name="Musashino K."/>
            <person name="Yuuki H."/>
            <person name="Oshima A."/>
            <person name="Sasaki N."/>
            <person name="Aotsuka S."/>
            <person name="Yoshikawa Y."/>
            <person name="Matsunawa H."/>
            <person name="Ichihara T."/>
            <person name="Shiohata N."/>
            <person name="Sano S."/>
            <person name="Moriya S."/>
            <person name="Momiyama H."/>
            <person name="Satoh N."/>
            <person name="Takami S."/>
            <person name="Terashima Y."/>
            <person name="Suzuki O."/>
            <person name="Nakagawa S."/>
            <person name="Senoh A."/>
            <person name="Mizoguchi H."/>
            <person name="Goto Y."/>
            <person name="Shimizu F."/>
            <person name="Wakebe H."/>
            <person name="Hishigaki H."/>
            <person name="Watanabe T."/>
            <person name="Sugiyama A."/>
            <person name="Takemoto M."/>
            <person name="Kawakami B."/>
            <person name="Yamazaki M."/>
            <person name="Watanabe K."/>
            <person name="Kumagai A."/>
            <person name="Itakura S."/>
            <person name="Fukuzumi Y."/>
            <person name="Fujimori Y."/>
            <person name="Komiyama M."/>
            <person name="Tashiro H."/>
            <person name="Tanigami A."/>
            <person name="Fujiwara T."/>
            <person name="Ono T."/>
            <person name="Yamada K."/>
            <person name="Fujii Y."/>
            <person name="Ozaki K."/>
            <person name="Hirao M."/>
            <person name="Ohmori Y."/>
            <person name="Kawabata A."/>
            <person name="Hikiji T."/>
            <person name="Kobatake N."/>
            <person name="Inagaki H."/>
            <person name="Ikema Y."/>
            <person name="Okamoto S."/>
            <person name="Okitani R."/>
            <person name="Kawakami T."/>
            <person name="Noguchi S."/>
            <person name="Itoh T."/>
            <person name="Shigeta K."/>
            <person name="Senba T."/>
            <person name="Matsumura K."/>
            <person name="Nakajima Y."/>
            <person name="Mizuno T."/>
            <person name="Morinaga M."/>
            <person name="Sasaki M."/>
            <person name="Togashi T."/>
            <person name="Oyama M."/>
            <person name="Hata H."/>
            <person name="Watanabe M."/>
            <person name="Komatsu T."/>
            <person name="Mizushima-Sugano J."/>
            <person name="Satoh T."/>
            <person name="Shirai Y."/>
            <person name="Takahashi Y."/>
            <person name="Nakagawa K."/>
            <person name="Okumura K."/>
            <person name="Nagase T."/>
            <person name="Nomura N."/>
            <person name="Kikuchi H."/>
            <person name="Masuho Y."/>
            <person name="Yamashita R."/>
            <person name="Nakai K."/>
            <person name="Yada T."/>
            <person name="Nakamura Y."/>
            <person name="Ohara O."/>
            <person name="Isogai T."/>
            <person name="Sugano S."/>
        </authorList>
    </citation>
    <scope>NUCLEOTIDE SEQUENCE [LARGE SCALE MRNA] (ISOFORM 4)</scope>
    <source>
        <tissue>Testis</tissue>
    </source>
</reference>
<reference key="4">
    <citation type="journal article" date="2006" name="Nature">
        <title>The DNA sequence, annotation and analysis of human chromosome 3.</title>
        <authorList>
            <person name="Muzny D.M."/>
            <person name="Scherer S.E."/>
            <person name="Kaul R."/>
            <person name="Wang J."/>
            <person name="Yu J."/>
            <person name="Sudbrak R."/>
            <person name="Buhay C.J."/>
            <person name="Chen R."/>
            <person name="Cree A."/>
            <person name="Ding Y."/>
            <person name="Dugan-Rocha S."/>
            <person name="Gill R."/>
            <person name="Gunaratne P."/>
            <person name="Harris R.A."/>
            <person name="Hawes A.C."/>
            <person name="Hernandez J."/>
            <person name="Hodgson A.V."/>
            <person name="Hume J."/>
            <person name="Jackson A."/>
            <person name="Khan Z.M."/>
            <person name="Kovar-Smith C."/>
            <person name="Lewis L.R."/>
            <person name="Lozado R.J."/>
            <person name="Metzker M.L."/>
            <person name="Milosavljevic A."/>
            <person name="Miner G.R."/>
            <person name="Morgan M.B."/>
            <person name="Nazareth L.V."/>
            <person name="Scott G."/>
            <person name="Sodergren E."/>
            <person name="Song X.-Z."/>
            <person name="Steffen D."/>
            <person name="Wei S."/>
            <person name="Wheeler D.A."/>
            <person name="Wright M.W."/>
            <person name="Worley K.C."/>
            <person name="Yuan Y."/>
            <person name="Zhang Z."/>
            <person name="Adams C.Q."/>
            <person name="Ansari-Lari M.A."/>
            <person name="Ayele M."/>
            <person name="Brown M.J."/>
            <person name="Chen G."/>
            <person name="Chen Z."/>
            <person name="Clendenning J."/>
            <person name="Clerc-Blankenburg K.P."/>
            <person name="Chen R."/>
            <person name="Chen Z."/>
            <person name="Davis C."/>
            <person name="Delgado O."/>
            <person name="Dinh H.H."/>
            <person name="Dong W."/>
            <person name="Draper H."/>
            <person name="Ernst S."/>
            <person name="Fu G."/>
            <person name="Gonzalez-Garay M.L."/>
            <person name="Garcia D.K."/>
            <person name="Gillett W."/>
            <person name="Gu J."/>
            <person name="Hao B."/>
            <person name="Haugen E."/>
            <person name="Havlak P."/>
            <person name="He X."/>
            <person name="Hennig S."/>
            <person name="Hu S."/>
            <person name="Huang W."/>
            <person name="Jackson L.R."/>
            <person name="Jacob L.S."/>
            <person name="Kelly S.H."/>
            <person name="Kube M."/>
            <person name="Levy R."/>
            <person name="Li Z."/>
            <person name="Liu B."/>
            <person name="Liu J."/>
            <person name="Liu W."/>
            <person name="Lu J."/>
            <person name="Maheshwari M."/>
            <person name="Nguyen B.-V."/>
            <person name="Okwuonu G.O."/>
            <person name="Palmeiri A."/>
            <person name="Pasternak S."/>
            <person name="Perez L.M."/>
            <person name="Phelps K.A."/>
            <person name="Plopper F.J."/>
            <person name="Qiang B."/>
            <person name="Raymond C."/>
            <person name="Rodriguez R."/>
            <person name="Saenphimmachak C."/>
            <person name="Santibanez J."/>
            <person name="Shen H."/>
            <person name="Shen Y."/>
            <person name="Subramanian S."/>
            <person name="Tabor P.E."/>
            <person name="Verduzco D."/>
            <person name="Waldron L."/>
            <person name="Wang J."/>
            <person name="Wang J."/>
            <person name="Wang Q."/>
            <person name="Williams G.A."/>
            <person name="Wong G.K.-S."/>
            <person name="Yao Z."/>
            <person name="Zhang J."/>
            <person name="Zhang X."/>
            <person name="Zhao G."/>
            <person name="Zhou J."/>
            <person name="Zhou Y."/>
            <person name="Nelson D."/>
            <person name="Lehrach H."/>
            <person name="Reinhardt R."/>
            <person name="Naylor S.L."/>
            <person name="Yang H."/>
            <person name="Olson M."/>
            <person name="Weinstock G."/>
            <person name="Gibbs R.A."/>
        </authorList>
    </citation>
    <scope>NUCLEOTIDE SEQUENCE [LARGE SCALE GENOMIC DNA]</scope>
</reference>
<reference key="5">
    <citation type="submission" date="2005-07" db="EMBL/GenBank/DDBJ databases">
        <authorList>
            <person name="Mural R.J."/>
            <person name="Istrail S."/>
            <person name="Sutton G."/>
            <person name="Florea L."/>
            <person name="Halpern A.L."/>
            <person name="Mobarry C.M."/>
            <person name="Lippert R."/>
            <person name="Walenz B."/>
            <person name="Shatkay H."/>
            <person name="Dew I."/>
            <person name="Miller J.R."/>
            <person name="Flanigan M.J."/>
            <person name="Edwards N.J."/>
            <person name="Bolanos R."/>
            <person name="Fasulo D."/>
            <person name="Halldorsson B.V."/>
            <person name="Hannenhalli S."/>
            <person name="Turner R."/>
            <person name="Yooseph S."/>
            <person name="Lu F."/>
            <person name="Nusskern D.R."/>
            <person name="Shue B.C."/>
            <person name="Zheng X.H."/>
            <person name="Zhong F."/>
            <person name="Delcher A.L."/>
            <person name="Huson D.H."/>
            <person name="Kravitz S.A."/>
            <person name="Mouchard L."/>
            <person name="Reinert K."/>
            <person name="Remington K.A."/>
            <person name="Clark A.G."/>
            <person name="Waterman M.S."/>
            <person name="Eichler E.E."/>
            <person name="Adams M.D."/>
            <person name="Hunkapiller M.W."/>
            <person name="Myers E.W."/>
            <person name="Venter J.C."/>
        </authorList>
    </citation>
    <scope>NUCLEOTIDE SEQUENCE [LARGE SCALE GENOMIC DNA]</scope>
</reference>
<reference key="6">
    <citation type="journal article" date="2004" name="Genome Res.">
        <title>The status, quality, and expansion of the NIH full-length cDNA project: the Mammalian Gene Collection (MGC).</title>
        <authorList>
            <consortium name="The MGC Project Team"/>
        </authorList>
    </citation>
    <scope>NUCLEOTIDE SEQUENCE [LARGE SCALE MRNA] (ISOFORM 4)</scope>
    <source>
        <tissue>Testis</tissue>
    </source>
</reference>
<reference key="7">
    <citation type="journal article" date="2000" name="Genomics">
        <title>Human NB-2 of the contactin subgroup molecules: chromosomal localization of the gene (CNTN5) and distinct expression pattern from other subgroup members.</title>
        <authorList>
            <person name="Kamei Y."/>
            <person name="Takeda Y."/>
            <person name="Teramoto K."/>
            <person name="Tsutsumi O."/>
            <person name="Taketani Y."/>
            <person name="Watanabe K."/>
        </authorList>
    </citation>
    <scope>TISSUE SPECIFICITY</scope>
</reference>
<reference key="8">
    <citation type="journal article" date="2004" name="Am. J. Hum. Genet.">
        <title>Disruption of contactin 4 (CNTN4) results in developmental delay and other features of 3p deletion syndrome.</title>
        <authorList>
            <person name="Fernandez T."/>
            <person name="Morgan T."/>
            <person name="Davis N."/>
            <person name="Klin A."/>
            <person name="Morris A."/>
            <person name="Farhi A."/>
            <person name="Lifton R.P."/>
            <person name="State M.W."/>
        </authorList>
    </citation>
    <scope>CHROMOSOMAL TRANSLOCATION</scope>
    <scope>INVOLVEMENT IN 3PDS</scope>
</reference>
<reference key="9">
    <citation type="journal article" date="2005" name="J. Proteome Res.">
        <title>Human plasma N-glycoproteome analysis by immunoaffinity subtraction, hydrazide chemistry, and mass spectrometry.</title>
        <authorList>
            <person name="Liu T."/>
            <person name="Qian W.-J."/>
            <person name="Gritsenko M.A."/>
            <person name="Camp D.G. II"/>
            <person name="Monroe M.E."/>
            <person name="Moore R.J."/>
            <person name="Smith R.D."/>
        </authorList>
    </citation>
    <scope>GLYCOSYLATION [LARGE SCALE ANALYSIS] AT ASN-65</scope>
    <source>
        <tissue>Plasma</tissue>
    </source>
</reference>
<reference key="10">
    <citation type="journal article" date="2010" name="Proc. Natl. Acad. Sci. U.S.A.">
        <title>The protein tyrosine phosphatases PTPRZ and PTPRG bind to distinct members of the contactin family of neural recognition molecules.</title>
        <authorList>
            <person name="Bouyain S."/>
            <person name="Watkins D.J."/>
        </authorList>
    </citation>
    <scope>INTERACTION WITH PTPRG</scope>
</reference>
<reference key="11">
    <citation type="journal article" date="2006" name="Science">
        <title>The consensus coding sequences of human breast and colorectal cancers.</title>
        <authorList>
            <person name="Sjoeblom T."/>
            <person name="Jones S."/>
            <person name="Wood L.D."/>
            <person name="Parsons D.W."/>
            <person name="Lin J."/>
            <person name="Barber T.D."/>
            <person name="Mandelker D."/>
            <person name="Leary R.J."/>
            <person name="Ptak J."/>
            <person name="Silliman N."/>
            <person name="Szabo S."/>
            <person name="Buckhaults P."/>
            <person name="Farrell C."/>
            <person name="Meeh P."/>
            <person name="Markowitz S.D."/>
            <person name="Willis J."/>
            <person name="Dawson D."/>
            <person name="Willson J.K.V."/>
            <person name="Gazdar A.F."/>
            <person name="Hartigan J."/>
            <person name="Wu L."/>
            <person name="Liu C."/>
            <person name="Parmigiani G."/>
            <person name="Park B.H."/>
            <person name="Bachman K.E."/>
            <person name="Papadopoulos N."/>
            <person name="Vogelstein B."/>
            <person name="Kinzler K.W."/>
            <person name="Velculescu V.E."/>
        </authorList>
    </citation>
    <scope>VARIANTS [LARGE SCALE ANALYSIS] PRO-176 AND ASN-420</scope>
</reference>
<sequence length="1026" mass="113454">MRLPWELLVLQSFILCLADDSTLHGPIFIQEPSPVMFPLDSEEKKVKLNCEVKGNPKPHIRWKLNGTDVDTGMDFRYSVVEGSLLINNPNKTQDAGTYQCTATNSFGTIVSREAKLQFAYLDNFKTRTRSTVSVRRGQGMVLLCGPPPHSGELSYAWIFNEYPSYQDNRRFVSQETGNLYIAKVEKSDVGNYTCVVTNTVTNHKVLGPPTPLILRNDGVMGEYEPKIEVQFPETVPTAKGATVKLECFALGNPVPTIIWRRADGKPIARKARRHKSNGILEIPNFQQEDAGLYECVAENSRGKNVARGQLTFYAQPNWIQKINDIHVAMEENVFWECKANGRPKPTYKWLKNGEPLLTRDRIQIEQGTLNITIVNLSDAGMYQCLAENKHGVIFSNAELSVIAVGPDFSRTLLKRVTLVKVGGEVVIECKPKASPKPVYTWKKGRDILKENERITISEDGNLRIINVTKSDAGSYTCIATNHFGTASSTGNLVVKDPTRVMVPPSSMDVTVGESIVLPCQVTHDHSLDIVFTWSFNGHLIDFDRDGDHFERVGGQDSAGDLMIRNIQLKHAGKYVCMVQTSVDRLSAAADLIVRGPPGPPEAVTIDEITDTTAQLSWRPGPDNHSPITMYVIQARTPFSVGWQAVSTVPELIDGKTFTATVVGLNPWVEYEFRTVAANVIGIGEPSRPSEKRRTEEALPEVTPANVSGGGGSKSELVITWETVPEELQNGRGFGYVVAFRPYGKMIWMLTVLASADASRYVFRNESVHPFSPFEVKVGVFNNKGEGPFSPTTVVYSAEEEPTKPPASIFARSLSATDIEVFWASPLEKNRGRIQGYEVKYWRHEDKEENARKIRTVGNQTSTKITNLKGSVLYHLAVKAYNSAGTGPSSATVNVTTRKPPPSQPPGNIIWNSSDSKIILNWDQVKALDNESEVKGYKVLYRWNRQSSTSVIETNKTSVELSLPFDEDYIIEIKPFSDGGDGSSSEQIRIPKISNAYARGSGASTSNACTLSAISTIMISLTARSSL</sequence>
<evidence type="ECO:0000250" key="1"/>
<evidence type="ECO:0000255" key="2"/>
<evidence type="ECO:0000255" key="3">
    <source>
        <dbReference type="PROSITE-ProRule" id="PRU00114"/>
    </source>
</evidence>
<evidence type="ECO:0000255" key="4">
    <source>
        <dbReference type="PROSITE-ProRule" id="PRU00316"/>
    </source>
</evidence>
<evidence type="ECO:0000256" key="5">
    <source>
        <dbReference type="SAM" id="MobiDB-lite"/>
    </source>
</evidence>
<evidence type="ECO:0000269" key="6">
    <source>
    </source>
</evidence>
<evidence type="ECO:0000269" key="7">
    <source>
    </source>
</evidence>
<evidence type="ECO:0000269" key="8">
    <source>
    </source>
</evidence>
<evidence type="ECO:0000269" key="9">
    <source>
    </source>
</evidence>
<evidence type="ECO:0000269" key="10">
    <source>
    </source>
</evidence>
<evidence type="ECO:0000269" key="11">
    <source>
    </source>
</evidence>
<evidence type="ECO:0000303" key="12">
    <source>
    </source>
</evidence>
<evidence type="ECO:0000303" key="13">
    <source>
    </source>
</evidence>
<evidence type="ECO:0000303" key="14">
    <source>
    </source>
</evidence>
<evidence type="ECO:0000305" key="15"/>
<keyword id="KW-0025">Alternative splicing</keyword>
<keyword id="KW-0130">Cell adhesion</keyword>
<keyword id="KW-1003">Cell membrane</keyword>
<keyword id="KW-0160">Chromosomal rearrangement</keyword>
<keyword id="KW-1015">Disulfide bond</keyword>
<keyword id="KW-0325">Glycoprotein</keyword>
<keyword id="KW-0336">GPI-anchor</keyword>
<keyword id="KW-0393">Immunoglobulin domain</keyword>
<keyword id="KW-0449">Lipoprotein</keyword>
<keyword id="KW-0472">Membrane</keyword>
<keyword id="KW-1267">Proteomics identification</keyword>
<keyword id="KW-1185">Reference proteome</keyword>
<keyword id="KW-0677">Repeat</keyword>
<keyword id="KW-0964">Secreted</keyword>
<keyword id="KW-0732">Signal</keyword>